<accession>Q7YRF1</accession>
<dbReference type="EMBL" id="AY221640">
    <property type="protein sequence ID" value="AAP45786.1"/>
    <property type="molecule type" value="mRNA"/>
</dbReference>
<dbReference type="RefSeq" id="NP_001002974.1">
    <property type="nucleotide sequence ID" value="NM_001002974.2"/>
</dbReference>
<dbReference type="SMR" id="Q7YRF1"/>
<dbReference type="BioGRID" id="139390">
    <property type="interactions" value="1"/>
</dbReference>
<dbReference type="FunCoup" id="Q7YRF1">
    <property type="interactions" value="2892"/>
</dbReference>
<dbReference type="STRING" id="9615.ENSCAFP00000056696"/>
<dbReference type="PaxDb" id="9612-ENSCAFP00000013540"/>
<dbReference type="GeneID" id="403459"/>
<dbReference type="KEGG" id="cfa:403459"/>
<dbReference type="CTD" id="8546"/>
<dbReference type="eggNOG" id="KOG1060">
    <property type="taxonomic scope" value="Eukaryota"/>
</dbReference>
<dbReference type="InParanoid" id="Q7YRF1"/>
<dbReference type="OrthoDB" id="302453at2759"/>
<dbReference type="Proteomes" id="UP000002254">
    <property type="component" value="Unplaced"/>
</dbReference>
<dbReference type="Proteomes" id="UP000694429">
    <property type="component" value="Unplaced"/>
</dbReference>
<dbReference type="Proteomes" id="UP000694542">
    <property type="component" value="Unplaced"/>
</dbReference>
<dbReference type="Proteomes" id="UP000805418">
    <property type="component" value="Unplaced"/>
</dbReference>
<dbReference type="GO" id="GO:0030123">
    <property type="term" value="C:AP-3 adaptor complex"/>
    <property type="evidence" value="ECO:0007669"/>
    <property type="project" value="InterPro"/>
</dbReference>
<dbReference type="GO" id="GO:1904115">
    <property type="term" value="C:axon cytoplasm"/>
    <property type="evidence" value="ECO:0007669"/>
    <property type="project" value="GOC"/>
</dbReference>
<dbReference type="GO" id="GO:0030131">
    <property type="term" value="C:clathrin adaptor complex"/>
    <property type="evidence" value="ECO:0007669"/>
    <property type="project" value="InterPro"/>
</dbReference>
<dbReference type="GO" id="GO:0030665">
    <property type="term" value="C:clathrin-coated vesicle membrane"/>
    <property type="evidence" value="ECO:0007669"/>
    <property type="project" value="UniProtKB-SubCell"/>
</dbReference>
<dbReference type="GO" id="GO:0005794">
    <property type="term" value="C:Golgi apparatus"/>
    <property type="evidence" value="ECO:0007669"/>
    <property type="project" value="UniProtKB-SubCell"/>
</dbReference>
<dbReference type="GO" id="GO:0008089">
    <property type="term" value="P:anterograde axonal transport"/>
    <property type="evidence" value="ECO:0000250"/>
    <property type="project" value="UniProtKB"/>
</dbReference>
<dbReference type="GO" id="GO:0048490">
    <property type="term" value="P:anterograde synaptic vesicle transport"/>
    <property type="evidence" value="ECO:0000250"/>
    <property type="project" value="UniProtKB"/>
</dbReference>
<dbReference type="GO" id="GO:0006886">
    <property type="term" value="P:intracellular protein transport"/>
    <property type="evidence" value="ECO:0007669"/>
    <property type="project" value="InterPro"/>
</dbReference>
<dbReference type="GO" id="GO:0016192">
    <property type="term" value="P:vesicle-mediated transport"/>
    <property type="evidence" value="ECO:0007669"/>
    <property type="project" value="InterPro"/>
</dbReference>
<dbReference type="Gene3D" id="1.25.10.10">
    <property type="entry name" value="Leucine-rich Repeat Variant"/>
    <property type="match status" value="1"/>
</dbReference>
<dbReference type="InterPro" id="IPR026740">
    <property type="entry name" value="AP3_beta"/>
</dbReference>
<dbReference type="InterPro" id="IPR056314">
    <property type="entry name" value="AP3B1/2_C"/>
</dbReference>
<dbReference type="InterPro" id="IPR029394">
    <property type="entry name" value="AP3B1_Ser"/>
</dbReference>
<dbReference type="InterPro" id="IPR029390">
    <property type="entry name" value="AP3B_C"/>
</dbReference>
<dbReference type="InterPro" id="IPR026739">
    <property type="entry name" value="AP_beta"/>
</dbReference>
<dbReference type="InterPro" id="IPR011989">
    <property type="entry name" value="ARM-like"/>
</dbReference>
<dbReference type="InterPro" id="IPR016024">
    <property type="entry name" value="ARM-type_fold"/>
</dbReference>
<dbReference type="InterPro" id="IPR015151">
    <property type="entry name" value="B-adaptin_app_sub_C"/>
</dbReference>
<dbReference type="InterPro" id="IPR002553">
    <property type="entry name" value="Clathrin/coatomer_adapt-like_N"/>
</dbReference>
<dbReference type="PANTHER" id="PTHR11134">
    <property type="entry name" value="ADAPTOR COMPLEX SUBUNIT BETA FAMILY MEMBER"/>
    <property type="match status" value="1"/>
</dbReference>
<dbReference type="Pfam" id="PF01602">
    <property type="entry name" value="Adaptin_N"/>
    <property type="match status" value="1"/>
</dbReference>
<dbReference type="Pfam" id="PF14796">
    <property type="entry name" value="AP3B1_C"/>
    <property type="match status" value="1"/>
</dbReference>
<dbReference type="Pfam" id="PF24080">
    <property type="entry name" value="AP3B1_C_2"/>
    <property type="match status" value="1"/>
</dbReference>
<dbReference type="Pfam" id="PF14797">
    <property type="entry name" value="SEEEED"/>
    <property type="match status" value="1"/>
</dbReference>
<dbReference type="PIRSF" id="PIRSF037096">
    <property type="entry name" value="AP3_complex_beta"/>
    <property type="match status" value="1"/>
</dbReference>
<dbReference type="SMART" id="SM01355">
    <property type="entry name" value="AP3B1_C"/>
    <property type="match status" value="1"/>
</dbReference>
<dbReference type="SMART" id="SM01020">
    <property type="entry name" value="B2-adapt-app_C"/>
    <property type="match status" value="1"/>
</dbReference>
<dbReference type="SUPFAM" id="SSF48371">
    <property type="entry name" value="ARM repeat"/>
    <property type="match status" value="1"/>
</dbReference>
<reference key="1">
    <citation type="submission" date="2003-01" db="EMBL/GenBank/DDBJ databases">
        <authorList>
            <person name="Benson K.F."/>
            <person name="Li F.-Q."/>
            <person name="Person R.E."/>
            <person name="Albani D."/>
            <person name="Duan Z."/>
            <person name="Wechsler J."/>
            <person name="Meade-White K."/>
            <person name="Williams K."/>
            <person name="Acland G.M."/>
            <person name="Niemeyer G."/>
            <person name="Lothrop C.D."/>
            <person name="Horwitz M."/>
        </authorList>
    </citation>
    <scope>NUCLEOTIDE SEQUENCE [MRNA]</scope>
    <source>
        <tissue>Peripheral blood</tissue>
    </source>
</reference>
<evidence type="ECO:0000250" key="1">
    <source>
        <dbReference type="UniProtKB" id="O00203"/>
    </source>
</evidence>
<evidence type="ECO:0000250" key="2">
    <source>
        <dbReference type="UniProtKB" id="Q9Z1T1"/>
    </source>
</evidence>
<evidence type="ECO:0000256" key="3">
    <source>
        <dbReference type="SAM" id="MobiDB-lite"/>
    </source>
</evidence>
<evidence type="ECO:0000305" key="4"/>
<keyword id="KW-0968">Cytoplasmic vesicle</keyword>
<keyword id="KW-0333">Golgi apparatus</keyword>
<keyword id="KW-0472">Membrane</keyword>
<keyword id="KW-0597">Phosphoprotein</keyword>
<keyword id="KW-0653">Protein transport</keyword>
<keyword id="KW-1185">Reference proteome</keyword>
<keyword id="KW-0813">Transport</keyword>
<sequence length="1091" mass="121191">MSGNSFAYSEQAGGGEATELGQEATSTVSPSGAFGLFSSDLKKNEDLKQMLESNKDSAKLDAMKRIVGMIAKGKNASELFPAVVKNVASKNIEIKKLVYVYLVRYAEEQQDLALLSISTFQRALKDPNQLIRASALRVLSSIRVPIIVPIMMLAIKEASADLSPYVRKNAAHAIQKLYSLDPEQKEMLIEVIEKLLKDKSTLVAGSVVMAFEEVCPDRIDLIHKNYRKLCNLLVDVEEWGQVVIIHMLTRYARTQFVSPWKEDDGLEDNEKNFYESDDEQKEKTDQKKKPYAMDPDHRLLIRNTKPLLQSRNAAVVMAVAQLYWHISPKSEVGIISKSLVRLLRSNREVQYIVLQNIATMSIQRKGMLEPYLKSFYVRSTDPTMIKILKLEILTNLANEANISTLLREFQTYVKSQDKQFAAATIQTIGRCATSISEVTDTCLSGLVCLLSNRDEIVVAESVVVIKKLLQMQPAQHGEIIKHMAKLLDSITVPVARASILWLIGENCERVPKIAPDVLRKMAKSFTNEDDLVKLQILNLGAKLYLTNSKQTKLLTQYILNLGKYDQNYDIRDRTRFIRQLIVPNEKSGALSKYAKKIFLAQKPAPLLESPFKDRDHFQLGTLSHTLNTKAIGYLELSNWPEVAPDPSVRNVEVIELQAKEWTPAGKAKKENPARKFYSDSEEEEDSSDSSSDSESESGSASGEQDEEGDSSEDSSEDSSSEHRSDSESVSEVGDKRTAKRNSKSKGKSDSEDEEKENEKSKTSDSSSTDSSSVEESSSDSESESESESESESKKVTMEKEKKTKEDRNLTKDVSLLDLDDFNPVSTPVVLPTPALSPSLIADLEGLNLSTSSSVISVNTPVFVPVKTHVLLHRMSGRGLAAHYFFPRQPCIFGDKMVSIQITLNNTTDRKIENIHIEGKKLPMGMQMHVFNPIESLEPEGSITVSMGIDFCDSTQTASFQLCTKDDCFNVNIQPPVGELLLPVAMSEKDFKKEQGMLTGMNETSTVIIAAPQNFTPSVILQKVVNIANVGVVPSGQDNIYRFAAKTVHSGSLMLVTVELKEGSTAQLIINTERTVIGSVLLRELKPVLSQG</sequence>
<protein>
    <recommendedName>
        <fullName>AP-3 complex subunit beta-1</fullName>
    </recommendedName>
    <alternativeName>
        <fullName>Adaptor protein complex AP-3 subunit beta-1</fullName>
    </alternativeName>
    <alternativeName>
        <fullName>Adaptor-related protein complex 3 subunit beta-1</fullName>
    </alternativeName>
    <alternativeName>
        <fullName>Beta-3A-adaptin</fullName>
    </alternativeName>
    <alternativeName>
        <fullName>Clathrin assembly protein complex 3 beta-1 large chain</fullName>
    </alternativeName>
</protein>
<proteinExistence type="evidence at transcript level"/>
<gene>
    <name type="primary">AP3B1</name>
    <name type="synonym">ADTB3A</name>
</gene>
<name>AP3B1_CANLF</name>
<feature type="chain" id="PRO_0000193745" description="AP-3 complex subunit beta-1">
    <location>
        <begin position="1"/>
        <end position="1091"/>
    </location>
</feature>
<feature type="region of interest" description="Disordered" evidence="3">
    <location>
        <begin position="1"/>
        <end position="32"/>
    </location>
</feature>
<feature type="region of interest" description="Disordered" evidence="3">
    <location>
        <begin position="267"/>
        <end position="290"/>
    </location>
</feature>
<feature type="region of interest" description="Disordered" evidence="3">
    <location>
        <begin position="664"/>
        <end position="807"/>
    </location>
</feature>
<feature type="compositionally biased region" description="Basic and acidic residues" evidence="3">
    <location>
        <begin position="267"/>
        <end position="288"/>
    </location>
</feature>
<feature type="compositionally biased region" description="Basic and acidic residues" evidence="3">
    <location>
        <begin position="667"/>
        <end position="678"/>
    </location>
</feature>
<feature type="compositionally biased region" description="Acidic residues" evidence="3">
    <location>
        <begin position="679"/>
        <end position="695"/>
    </location>
</feature>
<feature type="compositionally biased region" description="Acidic residues" evidence="3">
    <location>
        <begin position="703"/>
        <end position="718"/>
    </location>
</feature>
<feature type="compositionally biased region" description="Basic and acidic residues" evidence="3">
    <location>
        <begin position="719"/>
        <end position="736"/>
    </location>
</feature>
<feature type="compositionally biased region" description="Low complexity" evidence="3">
    <location>
        <begin position="763"/>
        <end position="775"/>
    </location>
</feature>
<feature type="compositionally biased region" description="Acidic residues" evidence="3">
    <location>
        <begin position="776"/>
        <end position="789"/>
    </location>
</feature>
<feature type="compositionally biased region" description="Basic and acidic residues" evidence="3">
    <location>
        <begin position="790"/>
        <end position="807"/>
    </location>
</feature>
<feature type="modified residue" description="Phosphoserine" evidence="1">
    <location>
        <position position="276"/>
    </location>
</feature>
<feature type="modified residue" description="Phosphoserine" evidence="1">
    <location>
        <position position="609"/>
    </location>
</feature>
<feature type="modified residue" description="Phosphoserine" evidence="1">
    <location>
        <position position="748"/>
    </location>
</feature>
<feature type="modified residue" description="Phosphoserine" evidence="1">
    <location>
        <position position="750"/>
    </location>
</feature>
<comment type="function">
    <text evidence="2">Subunit of non-clathrin- and clathrin-associated adaptor protein complex 3 (AP-3) that plays a role in protein sorting in the late-Golgi/trans-Golgi network (TGN) and/or endosomes. The AP complexes mediate both the recruitment of clathrin to membranes and the recognition of sorting signals within the cytosolic tails of transmembrane cargo molecules. AP-3 appears to be involved in the sorting of a subset of transmembrane proteins targeted to lysosomes and lysosome-related organelles. In concert with the BLOC-1 complex, AP-3 is required to target cargos into vesicles assembled at cell bodies for delivery into neurites and nerve terminals.</text>
</comment>
<comment type="subunit">
    <text evidence="1 2">Adaptor protein complex 3 (AP-3) is a heterotetramer composed of two large adaptins (delta-type subunit AP3D1 and beta-type subunit AP3B1 or AP3B2), a medium adaptin (mu-type subunit AP3M1 or AP3M2) and a small adaptin (sigma-type subunit APS1 or AP3S2) (By similarity). AP-3 associates with the BLOC-1 complex (By similarity). Interacts with KIF3A; interaction is direct; interaction is impaired by pyrophosphorylation of AP3B1 (By similarity).</text>
</comment>
<comment type="subcellular location">
    <subcellularLocation>
        <location evidence="1">Cytoplasmic vesicle</location>
        <location evidence="1">Clathrin-coated vesicle membrane</location>
        <topology evidence="1">Peripheral membrane protein</topology>
        <orientation evidence="1">Cytoplasmic side</orientation>
    </subcellularLocation>
    <subcellularLocation>
        <location evidence="1">Golgi apparatus</location>
    </subcellularLocation>
    <text evidence="1">Component of the coat surrounding the cytoplasmic face of coated vesicles located at the Golgi complex.</text>
</comment>
<comment type="PTM">
    <text evidence="1">Phosphorylated on serine residues.</text>
</comment>
<comment type="PTM">
    <text evidence="1">Pyrophosphorylation by 5-diphosphoinositol pentakisphosphate (5-IP7) impairs interaction with KIF3A. Serine pyrophosphorylation is achieved by Mg(2+)-dependent, but enzyme independent transfer of a beta-phosphate from a inositol pyrophosphate to a pre-phosphorylated serine residue.</text>
</comment>
<comment type="similarity">
    <text evidence="4">Belongs to the adaptor complexes large subunit family.</text>
</comment>
<organism>
    <name type="scientific">Canis lupus familiaris</name>
    <name type="common">Dog</name>
    <name type="synonym">Canis familiaris</name>
    <dbReference type="NCBI Taxonomy" id="9615"/>
    <lineage>
        <taxon>Eukaryota</taxon>
        <taxon>Metazoa</taxon>
        <taxon>Chordata</taxon>
        <taxon>Craniata</taxon>
        <taxon>Vertebrata</taxon>
        <taxon>Euteleostomi</taxon>
        <taxon>Mammalia</taxon>
        <taxon>Eutheria</taxon>
        <taxon>Laurasiatheria</taxon>
        <taxon>Carnivora</taxon>
        <taxon>Caniformia</taxon>
        <taxon>Canidae</taxon>
        <taxon>Canis</taxon>
    </lineage>
</organism>